<comment type="function">
    <text evidence="2">Stores iron in a soluble, non-toxic, readily available form. Important for iron homeostasis. Iron is taken up in the ferrous form and deposited as ferric hydroxides after oxidation.</text>
</comment>
<comment type="subunit">
    <text evidence="2">Oligomer of 24 subunits. The functional molecule is roughly spherical and contains a central cavity into which the polymeric mineral iron core is deposited.</text>
</comment>
<comment type="miscellaneous">
    <text>There are three types of ferritin subunits in amphibia: L, M and H chains. M and H chains are fast mineralizing; the L chain is very slow mineralizing.</text>
</comment>
<comment type="similarity">
    <text evidence="3">Belongs to the ferritin family.</text>
</comment>
<evidence type="ECO:0000255" key="1">
    <source>
        <dbReference type="PROSITE-ProRule" id="PRU00085"/>
    </source>
</evidence>
<evidence type="ECO:0000269" key="2">
    <source>
    </source>
</evidence>
<evidence type="ECO:0000305" key="3"/>
<evidence type="ECO:0007829" key="4">
    <source>
        <dbReference type="PDB" id="1RCD"/>
    </source>
</evidence>
<protein>
    <recommendedName>
        <fullName>Ferritin, lower subunit</fullName>
        <shortName>Ferritin L</shortName>
    </recommendedName>
</protein>
<organism>
    <name type="scientific">Aquarana catesbeiana</name>
    <name type="common">American bullfrog</name>
    <name type="synonym">Rana catesbeiana</name>
    <dbReference type="NCBI Taxonomy" id="8400"/>
    <lineage>
        <taxon>Eukaryota</taxon>
        <taxon>Metazoa</taxon>
        <taxon>Chordata</taxon>
        <taxon>Craniata</taxon>
        <taxon>Vertebrata</taxon>
        <taxon>Euteleostomi</taxon>
        <taxon>Amphibia</taxon>
        <taxon>Batrachia</taxon>
        <taxon>Anura</taxon>
        <taxon>Neobatrachia</taxon>
        <taxon>Ranoidea</taxon>
        <taxon>Ranidae</taxon>
        <taxon>Aquarana</taxon>
    </lineage>
</organism>
<keyword id="KW-0002">3D-structure</keyword>
<keyword id="KW-0408">Iron</keyword>
<keyword id="KW-0409">Iron storage</keyword>
<keyword id="KW-0479">Metal-binding</keyword>
<reference key="1">
    <citation type="journal article" date="1987" name="J. Biol. Chem.">
        <title>Differences in the regulation of messenger RNA for housekeeping and specialized-cell ferritin. A comparison of three distinct ferritin complementary DNAs, the corresponding subunits, and identification of the first processed in amphibia.</title>
        <authorList>
            <person name="Dickey L.F."/>
            <person name="Sreedharan S."/>
            <person name="Theil E.C."/>
            <person name="Didsbury J.R."/>
            <person name="Wang Y.-H."/>
            <person name="Kaufman R.E."/>
        </authorList>
    </citation>
    <scope>NUCLEOTIDE SEQUENCE [MRNA]</scope>
</reference>
<reference key="2">
    <citation type="journal article" date="1995" name="J. Mol. Biol.">
        <title>High resolution crystal structures of amphibian red-cell L ferritin: potential roles for structural plasticity and solvation in function.</title>
        <authorList>
            <person name="Trikha J."/>
            <person name="Theil E.C."/>
            <person name="Allewell N.M."/>
        </authorList>
    </citation>
    <scope>X-RAY CRYSTALLOGRAPHY (2.4 ANGSTROMS)</scope>
    <scope>FUNCTION</scope>
    <scope>SUBUNIT</scope>
</reference>
<dbReference type="EMBL" id="J02725">
    <property type="protein sequence ID" value="AAA49524.1"/>
    <property type="molecule type" value="mRNA"/>
</dbReference>
<dbReference type="PIR" id="B27805">
    <property type="entry name" value="B27805"/>
</dbReference>
<dbReference type="PDB" id="1RCC">
    <property type="method" value="X-ray"/>
    <property type="resolution" value="2.40 A"/>
    <property type="chains" value="A=1-173"/>
</dbReference>
<dbReference type="PDB" id="1RCD">
    <property type="method" value="X-ray"/>
    <property type="resolution" value="2.00 A"/>
    <property type="chains" value="A=1-173"/>
</dbReference>
<dbReference type="PDB" id="1RCE">
    <property type="method" value="X-ray"/>
    <property type="resolution" value="2.40 A"/>
    <property type="chains" value="A=1-173"/>
</dbReference>
<dbReference type="PDB" id="1RCG">
    <property type="method" value="X-ray"/>
    <property type="resolution" value="2.20 A"/>
    <property type="chains" value="A=1-173"/>
</dbReference>
<dbReference type="PDB" id="1RCI">
    <property type="method" value="X-ray"/>
    <property type="resolution" value="2.00 A"/>
    <property type="chains" value="A=1-173"/>
</dbReference>
<dbReference type="PDBsum" id="1RCC"/>
<dbReference type="PDBsum" id="1RCD"/>
<dbReference type="PDBsum" id="1RCE"/>
<dbReference type="PDBsum" id="1RCG"/>
<dbReference type="PDBsum" id="1RCI"/>
<dbReference type="SMR" id="P07797"/>
<dbReference type="SABIO-RK" id="P07797"/>
<dbReference type="EvolutionaryTrace" id="P07797"/>
<dbReference type="GO" id="GO:0005737">
    <property type="term" value="C:cytoplasm"/>
    <property type="evidence" value="ECO:0007669"/>
    <property type="project" value="TreeGrafter"/>
</dbReference>
<dbReference type="GO" id="GO:0008199">
    <property type="term" value="F:ferric iron binding"/>
    <property type="evidence" value="ECO:0007669"/>
    <property type="project" value="InterPro"/>
</dbReference>
<dbReference type="GO" id="GO:0008198">
    <property type="term" value="F:ferrous iron binding"/>
    <property type="evidence" value="ECO:0007669"/>
    <property type="project" value="TreeGrafter"/>
</dbReference>
<dbReference type="GO" id="GO:0006879">
    <property type="term" value="P:intracellular iron ion homeostasis"/>
    <property type="evidence" value="ECO:0007669"/>
    <property type="project" value="UniProtKB-KW"/>
</dbReference>
<dbReference type="GO" id="GO:0006826">
    <property type="term" value="P:iron ion transport"/>
    <property type="evidence" value="ECO:0007669"/>
    <property type="project" value="InterPro"/>
</dbReference>
<dbReference type="CDD" id="cd01056">
    <property type="entry name" value="Euk_Ferritin"/>
    <property type="match status" value="1"/>
</dbReference>
<dbReference type="FunFam" id="1.20.1260.10:FF:000002">
    <property type="entry name" value="Ferritin, mitochondrial"/>
    <property type="match status" value="1"/>
</dbReference>
<dbReference type="Gene3D" id="1.20.1260.10">
    <property type="match status" value="1"/>
</dbReference>
<dbReference type="InterPro" id="IPR001519">
    <property type="entry name" value="Ferritin"/>
</dbReference>
<dbReference type="InterPro" id="IPR012347">
    <property type="entry name" value="Ferritin-like"/>
</dbReference>
<dbReference type="InterPro" id="IPR009040">
    <property type="entry name" value="Ferritin-like_diiron"/>
</dbReference>
<dbReference type="InterPro" id="IPR009078">
    <property type="entry name" value="Ferritin-like_SF"/>
</dbReference>
<dbReference type="InterPro" id="IPR014034">
    <property type="entry name" value="Ferritin_CS"/>
</dbReference>
<dbReference type="InterPro" id="IPR008331">
    <property type="entry name" value="Ferritin_DPS_dom"/>
</dbReference>
<dbReference type="PANTHER" id="PTHR11431">
    <property type="entry name" value="FERRITIN"/>
    <property type="match status" value="1"/>
</dbReference>
<dbReference type="PANTHER" id="PTHR11431:SF106">
    <property type="entry name" value="FERRITIN"/>
    <property type="match status" value="1"/>
</dbReference>
<dbReference type="Pfam" id="PF00210">
    <property type="entry name" value="Ferritin"/>
    <property type="match status" value="1"/>
</dbReference>
<dbReference type="SUPFAM" id="SSF47240">
    <property type="entry name" value="Ferritin-like"/>
    <property type="match status" value="1"/>
</dbReference>
<dbReference type="PROSITE" id="PS00540">
    <property type="entry name" value="FERRITIN_1"/>
    <property type="match status" value="1"/>
</dbReference>
<dbReference type="PROSITE" id="PS00204">
    <property type="entry name" value="FERRITIN_2"/>
    <property type="match status" value="1"/>
</dbReference>
<dbReference type="PROSITE" id="PS50905">
    <property type="entry name" value="FERRITIN_LIKE"/>
    <property type="match status" value="1"/>
</dbReference>
<sequence length="173" mass="19938">MESQVRQNFHQDCEAGLNRTVNLKFHSSYVYLSMASYFNRDDVALSNFAKFFRERSEEEKEHAEKLIEYQNQRGGRVFLQSVEKPERDDWANGLEALQTALKLQKSVNQALLDLHAVAADKSDPHMTDFLESPYLSESVETIKKLGDHITSLKKLWSSHPGMAEYLFNKHTLG</sequence>
<name>FRI3_AQUCT</name>
<proteinExistence type="evidence at protein level"/>
<accession>P07797</accession>
<feature type="chain" id="PRO_0000201074" description="Ferritin, lower subunit">
    <location>
        <begin position="1"/>
        <end position="173"/>
    </location>
</feature>
<feature type="domain" description="Ferritin-like diiron" evidence="1">
    <location>
        <begin position="7"/>
        <end position="156"/>
    </location>
</feature>
<feature type="binding site" evidence="1">
    <location>
        <position position="59"/>
    </location>
    <ligand>
        <name>Fe cation</name>
        <dbReference type="ChEBI" id="CHEBI:24875"/>
        <label>1</label>
    </ligand>
</feature>
<feature type="binding site" evidence="1">
    <location>
        <position position="59"/>
    </location>
    <ligand>
        <name>Fe cation</name>
        <dbReference type="ChEBI" id="CHEBI:24875"/>
        <label>2</label>
    </ligand>
</feature>
<feature type="binding site" evidence="1">
    <location>
        <position position="62"/>
    </location>
    <ligand>
        <name>Fe cation</name>
        <dbReference type="ChEBI" id="CHEBI:24875"/>
        <label>1</label>
    </ligand>
</feature>
<feature type="helix" evidence="4">
    <location>
        <begin position="11"/>
        <end position="38"/>
    </location>
</feature>
<feature type="turn" evidence="4">
    <location>
        <begin position="41"/>
        <end position="43"/>
    </location>
</feature>
<feature type="helix" evidence="4">
    <location>
        <begin position="46"/>
        <end position="73"/>
    </location>
</feature>
<feature type="helix" evidence="4">
    <location>
        <begin position="93"/>
        <end position="120"/>
    </location>
</feature>
<feature type="helix" evidence="4">
    <location>
        <begin position="124"/>
        <end position="131"/>
    </location>
</feature>
<feature type="helix" evidence="4">
    <location>
        <begin position="134"/>
        <end position="156"/>
    </location>
</feature>
<feature type="helix" evidence="4">
    <location>
        <begin position="160"/>
        <end position="170"/>
    </location>
</feature>